<protein>
    <recommendedName>
        <fullName>5-methyltetrahydropteroyltriglutamate--homocysteine methyltransferase</fullName>
        <ecNumber>2.1.1.14</ecNumber>
    </recommendedName>
    <alternativeName>
        <fullName>Cobalamin-independent methionine synthase isozyme</fullName>
    </alternativeName>
    <alternativeName>
        <fullName>Vitamin-B12-independent methionine synthase isozyme</fullName>
    </alternativeName>
</protein>
<accession>P93263</accession>
<comment type="function">
    <text evidence="1">Catalyzes the transfer of a methyl group from 5-methyltetrahydrofolate to homocysteine resulting in methionine formation.</text>
</comment>
<comment type="catalytic activity">
    <reaction>
        <text>5-methyltetrahydropteroyltri-L-glutamate + L-homocysteine = tetrahydropteroyltri-L-glutamate + L-methionine</text>
        <dbReference type="Rhea" id="RHEA:21196"/>
        <dbReference type="ChEBI" id="CHEBI:57844"/>
        <dbReference type="ChEBI" id="CHEBI:58140"/>
        <dbReference type="ChEBI" id="CHEBI:58199"/>
        <dbReference type="ChEBI" id="CHEBI:58207"/>
        <dbReference type="EC" id="2.1.1.14"/>
    </reaction>
</comment>
<comment type="cofactor">
    <cofactor evidence="1">
        <name>Zn(2+)</name>
        <dbReference type="ChEBI" id="CHEBI:29105"/>
    </cofactor>
</comment>
<comment type="pathway">
    <text>Amino-acid biosynthesis; L-methionine biosynthesis via de novo pathway; L-methionine from L-homocysteine (MetE route): step 1/1.</text>
</comment>
<comment type="subcellular location">
    <subcellularLocation>
        <location evidence="4">Cytoplasm</location>
    </subcellularLocation>
</comment>
<comment type="similarity">
    <text evidence="4">Belongs to the vitamin-B12 independent methionine synthase family.</text>
</comment>
<feature type="chain" id="PRO_0000098698" description="5-methyltetrahydropteroyltriglutamate--homocysteine methyltransferase">
    <location>
        <begin position="1"/>
        <end position="765"/>
    </location>
</feature>
<feature type="active site" description="Proton donor" evidence="3">
    <location>
        <position position="701"/>
    </location>
</feature>
<feature type="binding site" evidence="3">
    <location>
        <position position="18"/>
    </location>
    <ligand>
        <name>5-methyltetrahydropteroyltri-L-glutamate</name>
        <dbReference type="ChEBI" id="CHEBI:58207"/>
    </ligand>
</feature>
<feature type="binding site" evidence="3">
    <location>
        <position position="116"/>
    </location>
    <ligand>
        <name>5-methyltetrahydropteroyltri-L-glutamate</name>
        <dbReference type="ChEBI" id="CHEBI:58207"/>
    </ligand>
</feature>
<feature type="binding site" evidence="3">
    <location>
        <begin position="437"/>
        <end position="439"/>
    </location>
    <ligand>
        <name>L-homocysteine</name>
        <dbReference type="ChEBI" id="CHEBI:58199"/>
    </ligand>
</feature>
<feature type="binding site" evidence="3">
    <location>
        <begin position="437"/>
        <end position="439"/>
    </location>
    <ligand>
        <name>L-methionine</name>
        <dbReference type="ChEBI" id="CHEBI:57844"/>
    </ligand>
</feature>
<feature type="binding site" evidence="3">
    <location>
        <position position="490"/>
    </location>
    <ligand>
        <name>L-homocysteine</name>
        <dbReference type="ChEBI" id="CHEBI:58199"/>
    </ligand>
</feature>
<feature type="binding site" evidence="3">
    <location>
        <position position="490"/>
    </location>
    <ligand>
        <name>L-methionine</name>
        <dbReference type="ChEBI" id="CHEBI:57844"/>
    </ligand>
</feature>
<feature type="binding site" evidence="3">
    <location>
        <position position="495"/>
    </location>
    <ligand>
        <name>5-methyltetrahydropteroyltri-L-glutamate</name>
        <dbReference type="ChEBI" id="CHEBI:58207"/>
    </ligand>
</feature>
<feature type="binding site" evidence="3">
    <location>
        <position position="518"/>
    </location>
    <ligand>
        <name>5-methyltetrahydropteroyltri-L-glutamate</name>
        <dbReference type="ChEBI" id="CHEBI:58207"/>
    </ligand>
</feature>
<feature type="binding site" evidence="2">
    <location>
        <begin position="521"/>
        <end position="522"/>
    </location>
    <ligand>
        <name>5-methyltetrahydropteroyltri-L-glutamate</name>
        <dbReference type="ChEBI" id="CHEBI:58207"/>
    </ligand>
</feature>
<feature type="binding site" evidence="3">
    <location>
        <position position="567"/>
    </location>
    <ligand>
        <name>5-methyltetrahydropteroyltri-L-glutamate</name>
        <dbReference type="ChEBI" id="CHEBI:58207"/>
    </ligand>
</feature>
<feature type="binding site" evidence="3">
    <location>
        <position position="605"/>
    </location>
    <ligand>
        <name>L-homocysteine</name>
        <dbReference type="ChEBI" id="CHEBI:58199"/>
    </ligand>
</feature>
<feature type="binding site" evidence="3">
    <location>
        <position position="605"/>
    </location>
    <ligand>
        <name>L-methionine</name>
        <dbReference type="ChEBI" id="CHEBI:57844"/>
    </ligand>
</feature>
<feature type="binding site" evidence="2">
    <location>
        <position position="647"/>
    </location>
    <ligand>
        <name>Zn(2+)</name>
        <dbReference type="ChEBI" id="CHEBI:29105"/>
        <label>1</label>
        <note>catalytic</note>
    </ligand>
</feature>
<feature type="binding site" evidence="2">
    <location>
        <position position="649"/>
    </location>
    <ligand>
        <name>Zn(2+)</name>
        <dbReference type="ChEBI" id="CHEBI:29105"/>
        <label>1</label>
        <note>catalytic</note>
    </ligand>
</feature>
<feature type="binding site" evidence="2">
    <location>
        <position position="658"/>
    </location>
    <ligand>
        <name>Zn(2+)</name>
        <dbReference type="ChEBI" id="CHEBI:29105"/>
        <label>2</label>
    </ligand>
</feature>
<feature type="binding site" evidence="2">
    <location>
        <position position="662"/>
    </location>
    <ligand>
        <name>Zn(2+)</name>
        <dbReference type="ChEBI" id="CHEBI:29105"/>
        <label>2</label>
    </ligand>
</feature>
<feature type="binding site" evidence="3">
    <location>
        <position position="671"/>
    </location>
    <ligand>
        <name>Zn(2+)</name>
        <dbReference type="ChEBI" id="CHEBI:29105"/>
        <label>1</label>
        <note>catalytic</note>
    </ligand>
</feature>
<feature type="binding site" evidence="2">
    <location>
        <position position="733"/>
    </location>
    <ligand>
        <name>Zn(2+)</name>
        <dbReference type="ChEBI" id="CHEBI:29105"/>
        <label>1</label>
        <note>catalytic</note>
    </ligand>
</feature>
<keyword id="KW-0028">Amino-acid biosynthesis</keyword>
<keyword id="KW-0963">Cytoplasm</keyword>
<keyword id="KW-0479">Metal-binding</keyword>
<keyword id="KW-0486">Methionine biosynthesis</keyword>
<keyword id="KW-0489">Methyltransferase</keyword>
<keyword id="KW-0808">Transferase</keyword>
<keyword id="KW-0862">Zinc</keyword>
<sequence length="765" mass="84822">MASHIVGYPRMGPKRELKFALESFWDGKSTAEDLKKVSADLRSSIWKQMADAGIKYIPSNTFSYYDQVLDTTAMLGAVPPRYGWTGGEIEFDVYFSMARGNASVPAMEMTKWFDTNYHFIVPELGPEVNFSYASHKAVLEYKEAKALGVDTVPVLVGPVSYLLLSKQAKGVDKSFDLLSLLPKILPIYKEVVAELKEAGASWIQFDEPLLVMDLESHKLQAFSAAYADLESTLSGLNVVVETYFADVTAEAYKTLISLKGVTGYGFDLVRGTKTLDLVKAEFPSGKYLFAGVVDGRNIWANDLAASLATLEALEGVVGKDKLVVSTSCSFLHTAVDLINETKLDDEIKSWLAFAAQKVLEVNALAKALSGQKDEAFFSANAAALASRKSSPRVTNEAVQKAATALKGSDHRRATTVSSRLDAQQKKLNLPILPTTTIGSFPQTVELRRVRREYKAKKISEEEYVKAIKEEISKVVKLQEELDIDVLVHGEPERNDMVEYFGEQLSGFAFSANGWVQSYGSRCVKPPIIYGDVSRPNPMTVFWSSMAQSMTARPMKGMLTGPVTILNWSFVRNDQPRHETCYQIALAIKNEVEDLEKAGINVIQIDEAALREGLPLRKSEHDFYLKWAVHSFRITNVGVQDTTQIHTHMCYSNFNDIIHSIIDMDADVITIENSRSDEKLLSVFREGVKYGAGIGPGVYDIHSPRIPPTEELADRIRKMLAVLESNVLWVNPDCGLKTRKYGEVNPALSNMVAAAKQLRQELASAK</sequence>
<proteinExistence type="evidence at transcript level"/>
<reference key="1">
    <citation type="submission" date="1997-01" db="EMBL/GenBank/DDBJ databases">
        <title>Mesembryanthemum crystallinum methionine synthase mRNA.</title>
        <authorList>
            <person name="Michalowski C.B."/>
            <person name="Quigley-Landreau F."/>
            <person name="Bohnert H.J."/>
        </authorList>
    </citation>
    <scope>NUCLEOTIDE SEQUENCE [MRNA]</scope>
</reference>
<evidence type="ECO:0000250" key="1"/>
<evidence type="ECO:0000250" key="2">
    <source>
        <dbReference type="UniProtKB" id="O50008"/>
    </source>
</evidence>
<evidence type="ECO:0000250" key="3">
    <source>
        <dbReference type="UniProtKB" id="P82610"/>
    </source>
</evidence>
<evidence type="ECO:0000305" key="4"/>
<gene>
    <name type="primary">METE</name>
</gene>
<organism>
    <name type="scientific">Mesembryanthemum crystallinum</name>
    <name type="common">Common ice plant</name>
    <name type="synonym">Cryophytum crystallinum</name>
    <dbReference type="NCBI Taxonomy" id="3544"/>
    <lineage>
        <taxon>Eukaryota</taxon>
        <taxon>Viridiplantae</taxon>
        <taxon>Streptophyta</taxon>
        <taxon>Embryophyta</taxon>
        <taxon>Tracheophyta</taxon>
        <taxon>Spermatophyta</taxon>
        <taxon>Magnoliopsida</taxon>
        <taxon>eudicotyledons</taxon>
        <taxon>Gunneridae</taxon>
        <taxon>Pentapetalae</taxon>
        <taxon>Caryophyllales</taxon>
        <taxon>Aizoaceae</taxon>
        <taxon>Mesembryanthemum</taxon>
        <taxon>Mesembryanthemum subgen. Cryophytum</taxon>
    </lineage>
</organism>
<dbReference type="EC" id="2.1.1.14"/>
<dbReference type="EMBL" id="U84889">
    <property type="protein sequence ID" value="AAB41896.1"/>
    <property type="molecule type" value="mRNA"/>
</dbReference>
<dbReference type="PIR" id="T12575">
    <property type="entry name" value="T12575"/>
</dbReference>
<dbReference type="SMR" id="P93263"/>
<dbReference type="UniPathway" id="UPA00051">
    <property type="reaction ID" value="UER00082"/>
</dbReference>
<dbReference type="GO" id="GO:0005737">
    <property type="term" value="C:cytoplasm"/>
    <property type="evidence" value="ECO:0007669"/>
    <property type="project" value="UniProtKB-SubCell"/>
</dbReference>
<dbReference type="GO" id="GO:0003871">
    <property type="term" value="F:5-methyltetrahydropteroyltriglutamate-homocysteine S-methyltransferase activity"/>
    <property type="evidence" value="ECO:0007669"/>
    <property type="project" value="UniProtKB-EC"/>
</dbReference>
<dbReference type="GO" id="GO:0008270">
    <property type="term" value="F:zinc ion binding"/>
    <property type="evidence" value="ECO:0007669"/>
    <property type="project" value="InterPro"/>
</dbReference>
<dbReference type="GO" id="GO:0009086">
    <property type="term" value="P:methionine biosynthetic process"/>
    <property type="evidence" value="ECO:0007669"/>
    <property type="project" value="UniProtKB-KW"/>
</dbReference>
<dbReference type="GO" id="GO:0032259">
    <property type="term" value="P:methylation"/>
    <property type="evidence" value="ECO:0007669"/>
    <property type="project" value="UniProtKB-KW"/>
</dbReference>
<dbReference type="CDD" id="cd03311">
    <property type="entry name" value="CIMS_C_terminal_like"/>
    <property type="match status" value="1"/>
</dbReference>
<dbReference type="CDD" id="cd03312">
    <property type="entry name" value="CIMS_N_terminal_like"/>
    <property type="match status" value="1"/>
</dbReference>
<dbReference type="FunFam" id="3.20.20.210:FF:000002">
    <property type="entry name" value="5-methyltetrahydropteroyltriglutamate--homocysteine methyltransferase"/>
    <property type="match status" value="1"/>
</dbReference>
<dbReference type="FunFam" id="3.20.20.210:FF:000003">
    <property type="entry name" value="5-methyltetrahydropteroyltriglutamate--homocysteine methyltransferase"/>
    <property type="match status" value="1"/>
</dbReference>
<dbReference type="Gene3D" id="3.20.20.210">
    <property type="match status" value="2"/>
</dbReference>
<dbReference type="HAMAP" id="MF_00172">
    <property type="entry name" value="Meth_synth"/>
    <property type="match status" value="1"/>
</dbReference>
<dbReference type="InterPro" id="IPR013215">
    <property type="entry name" value="Cbl-indep_Met_Synth_N"/>
</dbReference>
<dbReference type="InterPro" id="IPR006276">
    <property type="entry name" value="Cobalamin-indep_Met_synthase"/>
</dbReference>
<dbReference type="InterPro" id="IPR002629">
    <property type="entry name" value="Met_Synth_C/arc"/>
</dbReference>
<dbReference type="InterPro" id="IPR038071">
    <property type="entry name" value="UROD/MetE-like_sf"/>
</dbReference>
<dbReference type="NCBIfam" id="TIGR01371">
    <property type="entry name" value="met_syn_B12ind"/>
    <property type="match status" value="1"/>
</dbReference>
<dbReference type="NCBIfam" id="NF003556">
    <property type="entry name" value="PRK05222.1"/>
    <property type="match status" value="1"/>
</dbReference>
<dbReference type="PANTHER" id="PTHR30519">
    <property type="entry name" value="5-METHYLTETRAHYDROPTEROYLTRIGLUTAMATE--HOMOCYSTEINE METHYLTRANSFERASE"/>
    <property type="match status" value="1"/>
</dbReference>
<dbReference type="Pfam" id="PF08267">
    <property type="entry name" value="Meth_synt_1"/>
    <property type="match status" value="1"/>
</dbReference>
<dbReference type="Pfam" id="PF01717">
    <property type="entry name" value="Meth_synt_2"/>
    <property type="match status" value="1"/>
</dbReference>
<dbReference type="PIRSF" id="PIRSF000382">
    <property type="entry name" value="MeTrfase_B12_ind"/>
    <property type="match status" value="1"/>
</dbReference>
<dbReference type="SUPFAM" id="SSF51726">
    <property type="entry name" value="UROD/MetE-like"/>
    <property type="match status" value="2"/>
</dbReference>
<name>METE_MESCR</name>